<accession>B4SXE9</accession>
<reference key="1">
    <citation type="journal article" date="2011" name="J. Bacteriol.">
        <title>Comparative genomics of 28 Salmonella enterica isolates: evidence for CRISPR-mediated adaptive sublineage evolution.</title>
        <authorList>
            <person name="Fricke W.F."/>
            <person name="Mammel M.K."/>
            <person name="McDermott P.F."/>
            <person name="Tartera C."/>
            <person name="White D.G."/>
            <person name="Leclerc J.E."/>
            <person name="Ravel J."/>
            <person name="Cebula T.A."/>
        </authorList>
    </citation>
    <scope>NUCLEOTIDE SEQUENCE [LARGE SCALE GENOMIC DNA]</scope>
    <source>
        <strain>SL254</strain>
    </source>
</reference>
<organism>
    <name type="scientific">Salmonella newport (strain SL254)</name>
    <dbReference type="NCBI Taxonomy" id="423368"/>
    <lineage>
        <taxon>Bacteria</taxon>
        <taxon>Pseudomonadati</taxon>
        <taxon>Pseudomonadota</taxon>
        <taxon>Gammaproteobacteria</taxon>
        <taxon>Enterobacterales</taxon>
        <taxon>Enterobacteriaceae</taxon>
        <taxon>Salmonella</taxon>
    </lineage>
</organism>
<gene>
    <name evidence="1" type="primary">ligB</name>
    <name type="ordered locus">SNSL254_A4019</name>
</gene>
<comment type="function">
    <text evidence="1">Catalyzes the formation of phosphodiester linkages between 5'-phosphoryl and 3'-hydroxyl groups in double-stranded DNA using NAD as a coenzyme and as the energy source for the reaction.</text>
</comment>
<comment type="catalytic activity">
    <reaction evidence="1">
        <text>NAD(+) + (deoxyribonucleotide)n-3'-hydroxyl + 5'-phospho-(deoxyribonucleotide)m = (deoxyribonucleotide)n+m + AMP + beta-nicotinamide D-nucleotide.</text>
        <dbReference type="EC" id="6.5.1.2"/>
    </reaction>
</comment>
<comment type="similarity">
    <text evidence="1">Belongs to the NAD-dependent DNA ligase family. LigB subfamily.</text>
</comment>
<keyword id="KW-0227">DNA damage</keyword>
<keyword id="KW-0234">DNA repair</keyword>
<keyword id="KW-0235">DNA replication</keyword>
<keyword id="KW-0436">Ligase</keyword>
<keyword id="KW-0520">NAD</keyword>
<dbReference type="EC" id="6.5.1.2" evidence="1"/>
<dbReference type="EMBL" id="CP001113">
    <property type="protein sequence ID" value="ACF64200.1"/>
    <property type="molecule type" value="Genomic_DNA"/>
</dbReference>
<dbReference type="RefSeq" id="WP_001241851.1">
    <property type="nucleotide sequence ID" value="NZ_CCMR01000004.1"/>
</dbReference>
<dbReference type="SMR" id="B4SXE9"/>
<dbReference type="KEGG" id="see:SNSL254_A4019"/>
<dbReference type="HOGENOM" id="CLU_489786_0_0_6"/>
<dbReference type="Proteomes" id="UP000008824">
    <property type="component" value="Chromosome"/>
</dbReference>
<dbReference type="GO" id="GO:0003911">
    <property type="term" value="F:DNA ligase (NAD+) activity"/>
    <property type="evidence" value="ECO:0007669"/>
    <property type="project" value="UniProtKB-UniRule"/>
</dbReference>
<dbReference type="GO" id="GO:0006281">
    <property type="term" value="P:DNA repair"/>
    <property type="evidence" value="ECO:0007669"/>
    <property type="project" value="UniProtKB-KW"/>
</dbReference>
<dbReference type="GO" id="GO:0006260">
    <property type="term" value="P:DNA replication"/>
    <property type="evidence" value="ECO:0007669"/>
    <property type="project" value="UniProtKB-KW"/>
</dbReference>
<dbReference type="FunFam" id="1.10.287.610:FF:000003">
    <property type="entry name" value="DNA ligase B"/>
    <property type="match status" value="1"/>
</dbReference>
<dbReference type="FunFam" id="2.40.50.140:FF:000139">
    <property type="entry name" value="DNA ligase B"/>
    <property type="match status" value="1"/>
</dbReference>
<dbReference type="FunFam" id="3.30.470.30:FF:000007">
    <property type="entry name" value="DNA ligase B"/>
    <property type="match status" value="1"/>
</dbReference>
<dbReference type="Gene3D" id="1.10.150.20">
    <property type="entry name" value="5' to 3' exonuclease, C-terminal subdomain"/>
    <property type="match status" value="1"/>
</dbReference>
<dbReference type="Gene3D" id="3.30.470.30">
    <property type="entry name" value="DNA ligase/mRNA capping enzyme"/>
    <property type="match status" value="1"/>
</dbReference>
<dbReference type="Gene3D" id="1.10.287.610">
    <property type="entry name" value="Helix hairpin bin"/>
    <property type="match status" value="1"/>
</dbReference>
<dbReference type="Gene3D" id="2.40.50.140">
    <property type="entry name" value="Nucleic acid-binding proteins"/>
    <property type="match status" value="1"/>
</dbReference>
<dbReference type="HAMAP" id="MF_01587">
    <property type="entry name" value="DNA_ligase_B"/>
    <property type="match status" value="1"/>
</dbReference>
<dbReference type="InterPro" id="IPR018239">
    <property type="entry name" value="DNA_ligase_AS"/>
</dbReference>
<dbReference type="InterPro" id="IPR020923">
    <property type="entry name" value="DNA_ligase_B"/>
</dbReference>
<dbReference type="InterPro" id="IPR033136">
    <property type="entry name" value="DNA_ligase_CS"/>
</dbReference>
<dbReference type="InterPro" id="IPR013839">
    <property type="entry name" value="DNAligase_adenylation"/>
</dbReference>
<dbReference type="InterPro" id="IPR013840">
    <property type="entry name" value="DNAligase_N"/>
</dbReference>
<dbReference type="InterPro" id="IPR012340">
    <property type="entry name" value="NA-bd_OB-fold"/>
</dbReference>
<dbReference type="InterPro" id="IPR050326">
    <property type="entry name" value="NAD_dep_DNA_ligaseB"/>
</dbReference>
<dbReference type="InterPro" id="IPR004150">
    <property type="entry name" value="NAD_DNA_ligase_OB"/>
</dbReference>
<dbReference type="InterPro" id="IPR010994">
    <property type="entry name" value="RuvA_2-like"/>
</dbReference>
<dbReference type="NCBIfam" id="NF005987">
    <property type="entry name" value="PRK08097.1"/>
    <property type="match status" value="1"/>
</dbReference>
<dbReference type="PANTHER" id="PTHR47810">
    <property type="entry name" value="DNA LIGASE"/>
    <property type="match status" value="1"/>
</dbReference>
<dbReference type="PANTHER" id="PTHR47810:SF1">
    <property type="entry name" value="DNA LIGASE B"/>
    <property type="match status" value="1"/>
</dbReference>
<dbReference type="Pfam" id="PF01653">
    <property type="entry name" value="DNA_ligase_aden"/>
    <property type="match status" value="1"/>
</dbReference>
<dbReference type="Pfam" id="PF03120">
    <property type="entry name" value="DNA_ligase_OB"/>
    <property type="match status" value="1"/>
</dbReference>
<dbReference type="SMART" id="SM00532">
    <property type="entry name" value="LIGANc"/>
    <property type="match status" value="1"/>
</dbReference>
<dbReference type="SUPFAM" id="SSF56091">
    <property type="entry name" value="DNA ligase/mRNA capping enzyme, catalytic domain"/>
    <property type="match status" value="1"/>
</dbReference>
<dbReference type="SUPFAM" id="SSF50249">
    <property type="entry name" value="Nucleic acid-binding proteins"/>
    <property type="match status" value="1"/>
</dbReference>
<dbReference type="SUPFAM" id="SSF47781">
    <property type="entry name" value="RuvA domain 2-like"/>
    <property type="match status" value="1"/>
</dbReference>
<dbReference type="PROSITE" id="PS01055">
    <property type="entry name" value="DNA_LIGASE_N1"/>
    <property type="match status" value="1"/>
</dbReference>
<dbReference type="PROSITE" id="PS01056">
    <property type="entry name" value="DNA_LIGASE_N2"/>
    <property type="match status" value="1"/>
</dbReference>
<feature type="chain" id="PRO_1000147731" description="DNA ligase B">
    <location>
        <begin position="1"/>
        <end position="561"/>
    </location>
</feature>
<feature type="active site" description="N6-AMP-lysine intermediate" evidence="1">
    <location>
        <position position="125"/>
    </location>
</feature>
<sequence length="561" mass="62922">MRLWKSMAWGILLWHSQSGALCPAWPPARAAEEITRLQQQLADWNDIYWKQGVSAVDDSVYDQLSARLVQWQRCVGQDVSSTPVSPPLNGTTMHPVAHTGVRKLADRQVVEQWMRGRSELWVQPKVDGVAVTLVYQNGKLARAISRGNGLQGEDWTPKIRLIPSIPQSTQGALANAVLQGEIFLQREGHIQQRMGGMNARSKVAGMLMRQDNASALNSLGIFIWAWPDGPANMPERLSQLAKAGFSLTKKYSLVVKDASEVERARQSWLTSALPFVTDGVVIRMAKEPASQYWRPGQGDWLAAWKYPPVAQVAQVSAIQFSVGKSGKITVVASLVPVILDDKRVQRVNIGSVKRWEAWDIAPGDQILVSLAGQGIPRLDEVVWRSRERSKPVPPDSHFNSLTCFYASATCQEQFISRLIWLGSRSALGLDGMGEASWRALHQTHRFEHIFSWLTLTSAQIANTPGFAKGKSEQIWRQFNLARRQPFTRWIMAMDIPLTQAALQASGDRSWEQLLMRTEQHWRQLPATGERRAGRVIDWRNNLQIKALSRWLAAQHIPGFGS</sequence>
<proteinExistence type="inferred from homology"/>
<protein>
    <recommendedName>
        <fullName evidence="1">DNA ligase B</fullName>
        <ecNumber evidence="1">6.5.1.2</ecNumber>
    </recommendedName>
    <alternativeName>
        <fullName evidence="1">Polydeoxyribonucleotide synthase [NAD(+)] B</fullName>
    </alternativeName>
</protein>
<name>LIGB_SALNS</name>
<evidence type="ECO:0000255" key="1">
    <source>
        <dbReference type="HAMAP-Rule" id="MF_01587"/>
    </source>
</evidence>